<organism>
    <name type="scientific">Rhodospirillum centenum (strain ATCC 51521 / SW)</name>
    <dbReference type="NCBI Taxonomy" id="414684"/>
    <lineage>
        <taxon>Bacteria</taxon>
        <taxon>Pseudomonadati</taxon>
        <taxon>Pseudomonadota</taxon>
        <taxon>Alphaproteobacteria</taxon>
        <taxon>Rhodospirillales</taxon>
        <taxon>Rhodospirillaceae</taxon>
        <taxon>Rhodospirillum</taxon>
    </lineage>
</organism>
<gene>
    <name evidence="1" type="primary">rpsS</name>
    <name type="ordered locus">RC1_0715</name>
</gene>
<feature type="chain" id="PRO_1000128026" description="Small ribosomal subunit protein uS19">
    <location>
        <begin position="1"/>
        <end position="92"/>
    </location>
</feature>
<dbReference type="EMBL" id="CP000613">
    <property type="protein sequence ID" value="ACI98146.1"/>
    <property type="molecule type" value="Genomic_DNA"/>
</dbReference>
<dbReference type="RefSeq" id="WP_012565937.1">
    <property type="nucleotide sequence ID" value="NC_011420.2"/>
</dbReference>
<dbReference type="SMR" id="B6IRR0"/>
<dbReference type="STRING" id="414684.RC1_0715"/>
<dbReference type="KEGG" id="rce:RC1_0715"/>
<dbReference type="eggNOG" id="COG0185">
    <property type="taxonomic scope" value="Bacteria"/>
</dbReference>
<dbReference type="HOGENOM" id="CLU_144911_0_1_5"/>
<dbReference type="OrthoDB" id="9797833at2"/>
<dbReference type="Proteomes" id="UP000001591">
    <property type="component" value="Chromosome"/>
</dbReference>
<dbReference type="GO" id="GO:0005737">
    <property type="term" value="C:cytoplasm"/>
    <property type="evidence" value="ECO:0007669"/>
    <property type="project" value="UniProtKB-ARBA"/>
</dbReference>
<dbReference type="GO" id="GO:0015935">
    <property type="term" value="C:small ribosomal subunit"/>
    <property type="evidence" value="ECO:0007669"/>
    <property type="project" value="InterPro"/>
</dbReference>
<dbReference type="GO" id="GO:0019843">
    <property type="term" value="F:rRNA binding"/>
    <property type="evidence" value="ECO:0007669"/>
    <property type="project" value="UniProtKB-UniRule"/>
</dbReference>
<dbReference type="GO" id="GO:0003735">
    <property type="term" value="F:structural constituent of ribosome"/>
    <property type="evidence" value="ECO:0007669"/>
    <property type="project" value="InterPro"/>
</dbReference>
<dbReference type="GO" id="GO:0000028">
    <property type="term" value="P:ribosomal small subunit assembly"/>
    <property type="evidence" value="ECO:0007669"/>
    <property type="project" value="TreeGrafter"/>
</dbReference>
<dbReference type="GO" id="GO:0006412">
    <property type="term" value="P:translation"/>
    <property type="evidence" value="ECO:0007669"/>
    <property type="project" value="UniProtKB-UniRule"/>
</dbReference>
<dbReference type="FunFam" id="3.30.860.10:FF:000001">
    <property type="entry name" value="30S ribosomal protein S19"/>
    <property type="match status" value="1"/>
</dbReference>
<dbReference type="Gene3D" id="3.30.860.10">
    <property type="entry name" value="30s Ribosomal Protein S19, Chain A"/>
    <property type="match status" value="1"/>
</dbReference>
<dbReference type="HAMAP" id="MF_00531">
    <property type="entry name" value="Ribosomal_uS19"/>
    <property type="match status" value="1"/>
</dbReference>
<dbReference type="InterPro" id="IPR002222">
    <property type="entry name" value="Ribosomal_uS19"/>
</dbReference>
<dbReference type="InterPro" id="IPR005732">
    <property type="entry name" value="Ribosomal_uS19_bac-type"/>
</dbReference>
<dbReference type="InterPro" id="IPR020934">
    <property type="entry name" value="Ribosomal_uS19_CS"/>
</dbReference>
<dbReference type="InterPro" id="IPR023575">
    <property type="entry name" value="Ribosomal_uS19_SF"/>
</dbReference>
<dbReference type="NCBIfam" id="TIGR01050">
    <property type="entry name" value="rpsS_bact"/>
    <property type="match status" value="1"/>
</dbReference>
<dbReference type="PANTHER" id="PTHR11880">
    <property type="entry name" value="RIBOSOMAL PROTEIN S19P FAMILY MEMBER"/>
    <property type="match status" value="1"/>
</dbReference>
<dbReference type="PANTHER" id="PTHR11880:SF8">
    <property type="entry name" value="SMALL RIBOSOMAL SUBUNIT PROTEIN US19M"/>
    <property type="match status" value="1"/>
</dbReference>
<dbReference type="Pfam" id="PF00203">
    <property type="entry name" value="Ribosomal_S19"/>
    <property type="match status" value="1"/>
</dbReference>
<dbReference type="PIRSF" id="PIRSF002144">
    <property type="entry name" value="Ribosomal_S19"/>
    <property type="match status" value="1"/>
</dbReference>
<dbReference type="PRINTS" id="PR00975">
    <property type="entry name" value="RIBOSOMALS19"/>
</dbReference>
<dbReference type="SUPFAM" id="SSF54570">
    <property type="entry name" value="Ribosomal protein S19"/>
    <property type="match status" value="1"/>
</dbReference>
<dbReference type="PROSITE" id="PS00323">
    <property type="entry name" value="RIBOSOMAL_S19"/>
    <property type="match status" value="1"/>
</dbReference>
<reference key="1">
    <citation type="submission" date="2007-03" db="EMBL/GenBank/DDBJ databases">
        <title>Genome sequence of Rhodospirillum centenum.</title>
        <authorList>
            <person name="Touchman J.W."/>
            <person name="Bauer C."/>
            <person name="Blankenship R.E."/>
        </authorList>
    </citation>
    <scope>NUCLEOTIDE SEQUENCE [LARGE SCALE GENOMIC DNA]</scope>
    <source>
        <strain>ATCC 51521 / SW</strain>
    </source>
</reference>
<sequence length="92" mass="10505">MTRSVWKGPFVDGYLLKKAEKARASGRNEIIKIWSRRSTILPQFVGLTFGVYNGQKFLPVLVTENMIGHKFGEFSPTRTFYGHAADKKAKRK</sequence>
<accession>B6IRR0</accession>
<keyword id="KW-1185">Reference proteome</keyword>
<keyword id="KW-0687">Ribonucleoprotein</keyword>
<keyword id="KW-0689">Ribosomal protein</keyword>
<keyword id="KW-0694">RNA-binding</keyword>
<keyword id="KW-0699">rRNA-binding</keyword>
<protein>
    <recommendedName>
        <fullName evidence="1">Small ribosomal subunit protein uS19</fullName>
    </recommendedName>
    <alternativeName>
        <fullName evidence="2">30S ribosomal protein S19</fullName>
    </alternativeName>
</protein>
<proteinExistence type="inferred from homology"/>
<comment type="function">
    <text evidence="1">Protein S19 forms a complex with S13 that binds strongly to the 16S ribosomal RNA.</text>
</comment>
<comment type="similarity">
    <text evidence="1">Belongs to the universal ribosomal protein uS19 family.</text>
</comment>
<name>RS19_RHOCS</name>
<evidence type="ECO:0000255" key="1">
    <source>
        <dbReference type="HAMAP-Rule" id="MF_00531"/>
    </source>
</evidence>
<evidence type="ECO:0000305" key="2"/>